<sequence length="79" mass="7763">RVSSAVSSLVSSGPTTPAALSNTISSAVSQISASNPGLSGCDVLVQALLEVVSALVHILGSSSVGQINYGASAQYAQMV</sequence>
<accession>P46802</accession>
<protein>
    <recommendedName>
        <fullName>Spidroin-1</fullName>
    </recommendedName>
    <alternativeName>
        <fullName>Dragline silk fibroin 1</fullName>
    </alternativeName>
</protein>
<reference key="1">
    <citation type="journal article" date="1994" name="J. Biol. Chem.">
        <title>Sequence conservation in the C-terminal region of spider silk proteins (Spidroin) from Nephila clavipes (Tetragnathidae) and Araneus bicentenarius (Araneidae).</title>
        <authorList>
            <person name="Beckwitt R."/>
            <person name="Arcidiacono S."/>
        </authorList>
    </citation>
    <scope>NUCLEOTIDE SEQUENCE</scope>
</reference>
<dbReference type="EMBL" id="U03847">
    <property type="protein sequence ID" value="AAA17673.1"/>
    <property type="molecule type" value="Unassigned_DNA"/>
</dbReference>
<dbReference type="PIR" id="B54368">
    <property type="entry name" value="B54368"/>
</dbReference>
<dbReference type="SMR" id="P46802"/>
<dbReference type="GO" id="GO:0005576">
    <property type="term" value="C:extracellular region"/>
    <property type="evidence" value="ECO:0007669"/>
    <property type="project" value="UniProtKB-SubCell"/>
</dbReference>
<dbReference type="Gene3D" id="1.10.10.1350">
    <property type="entry name" value="Spidroin domain, C-terminal domain"/>
    <property type="match status" value="1"/>
</dbReference>
<dbReference type="InterPro" id="IPR021001">
    <property type="entry name" value="Spidroin_C"/>
</dbReference>
<dbReference type="InterPro" id="IPR038542">
    <property type="entry name" value="Spidroin_C_sf"/>
</dbReference>
<dbReference type="Pfam" id="PF11260">
    <property type="entry name" value="Spidroin_MaSp"/>
    <property type="match status" value="1"/>
</dbReference>
<keyword id="KW-0964">Secreted</keyword>
<keyword id="KW-0737">Silk protein</keyword>
<proteinExistence type="inferred from homology"/>
<comment type="function">
    <text>Spiders' major ampullate silk possesses unique characteristics of strength and elasticity. Fibroin consists of pseudocrystalline regions of antiparallel beta-sheet interspersed with elastic amorphous segments.</text>
</comment>
<comment type="subunit">
    <text>Major subunit, with spidroin 2, of the dragline silk.</text>
</comment>
<comment type="subcellular location">
    <subcellularLocation>
        <location>Secreted</location>
        <location>Extracellular space</location>
    </subcellularLocation>
</comment>
<comment type="domain">
    <text>Highly repetitive protein characterized by regions of polyalanine and glycine-rich repeating units.</text>
</comment>
<comment type="similarity">
    <text evidence="1">Belongs to the silk fibroin family.</text>
</comment>
<feature type="chain" id="PRO_0000221445" description="Spidroin-1">
    <location>
        <begin position="1" status="less than"/>
        <end position="79"/>
    </location>
</feature>
<feature type="non-terminal residue">
    <location>
        <position position="1"/>
    </location>
</feature>
<name>SPD1_ARABI</name>
<organism>
    <name type="scientific">Araneus bicentenarius</name>
    <name type="common">Giant lichen orbweaver</name>
    <dbReference type="NCBI Taxonomy" id="29013"/>
    <lineage>
        <taxon>Eukaryota</taxon>
        <taxon>Metazoa</taxon>
        <taxon>Ecdysozoa</taxon>
        <taxon>Arthropoda</taxon>
        <taxon>Chelicerata</taxon>
        <taxon>Arachnida</taxon>
        <taxon>Araneae</taxon>
        <taxon>Araneomorphae</taxon>
        <taxon>Entelegynae</taxon>
        <taxon>Araneoidea</taxon>
        <taxon>Araneidae</taxon>
        <taxon>Araneus</taxon>
    </lineage>
</organism>
<evidence type="ECO:0000305" key="1"/>